<gene>
    <name evidence="1" type="primary">leuD</name>
    <name type="ordered locus">Adeh_1979</name>
</gene>
<reference key="1">
    <citation type="submission" date="2006-01" db="EMBL/GenBank/DDBJ databases">
        <title>Complete sequence of Anaeromyxobacter dehalogenans 2CP-C.</title>
        <authorList>
            <person name="Copeland A."/>
            <person name="Lucas S."/>
            <person name="Lapidus A."/>
            <person name="Barry K."/>
            <person name="Detter J.C."/>
            <person name="Glavina T."/>
            <person name="Hammon N."/>
            <person name="Israni S."/>
            <person name="Pitluck S."/>
            <person name="Brettin T."/>
            <person name="Bruce D."/>
            <person name="Han C."/>
            <person name="Tapia R."/>
            <person name="Gilna P."/>
            <person name="Kiss H."/>
            <person name="Schmutz J."/>
            <person name="Larimer F."/>
            <person name="Land M."/>
            <person name="Kyrpides N."/>
            <person name="Anderson I."/>
            <person name="Sanford R.A."/>
            <person name="Ritalahti K.M."/>
            <person name="Thomas H.S."/>
            <person name="Kirby J.R."/>
            <person name="Zhulin I.B."/>
            <person name="Loeffler F.E."/>
            <person name="Richardson P."/>
        </authorList>
    </citation>
    <scope>NUCLEOTIDE SEQUENCE [LARGE SCALE GENOMIC DNA]</scope>
    <source>
        <strain>2CP-C</strain>
    </source>
</reference>
<name>LEUD_ANADE</name>
<comment type="function">
    <text evidence="1">Catalyzes the isomerization between 2-isopropylmalate and 3-isopropylmalate, via the formation of 2-isopropylmaleate.</text>
</comment>
<comment type="catalytic activity">
    <reaction evidence="1">
        <text>(2R,3S)-3-isopropylmalate = (2S)-2-isopropylmalate</text>
        <dbReference type="Rhea" id="RHEA:32287"/>
        <dbReference type="ChEBI" id="CHEBI:1178"/>
        <dbReference type="ChEBI" id="CHEBI:35121"/>
        <dbReference type="EC" id="4.2.1.33"/>
    </reaction>
</comment>
<comment type="pathway">
    <text evidence="1">Amino-acid biosynthesis; L-leucine biosynthesis; L-leucine from 3-methyl-2-oxobutanoate: step 2/4.</text>
</comment>
<comment type="subunit">
    <text evidence="1">Heterodimer of LeuC and LeuD.</text>
</comment>
<comment type="similarity">
    <text evidence="1">Belongs to the LeuD family. LeuD type 1 subfamily.</text>
</comment>
<keyword id="KW-0028">Amino-acid biosynthesis</keyword>
<keyword id="KW-0100">Branched-chain amino acid biosynthesis</keyword>
<keyword id="KW-0432">Leucine biosynthesis</keyword>
<keyword id="KW-0456">Lyase</keyword>
<keyword id="KW-1185">Reference proteome</keyword>
<sequence>MEPIRVIESRTVVLPRENVDTDQIIPARFLKVTDKKGLGKALFSDWRYAADGSPRPDFVLNRPEAQGCSILVAGDNFGCGSSREHAPWALVDAGVRAVISTRIADIFRNNALKNGLVPVVLDPASHAKLLAAPGASVRVDVEAQTVTLPDGSTAKFPIDGFARYCLLNGVDELGFLLAQDADIAAFEGGRR</sequence>
<feature type="chain" id="PRO_1000063728" description="3-isopropylmalate dehydratase small subunit">
    <location>
        <begin position="1"/>
        <end position="191"/>
    </location>
</feature>
<protein>
    <recommendedName>
        <fullName evidence="1">3-isopropylmalate dehydratase small subunit</fullName>
        <ecNumber evidence="1">4.2.1.33</ecNumber>
    </recommendedName>
    <alternativeName>
        <fullName evidence="1">Alpha-IPM isomerase</fullName>
        <shortName evidence="1">IPMI</shortName>
    </alternativeName>
    <alternativeName>
        <fullName evidence="1">Isopropylmalate isomerase</fullName>
    </alternativeName>
</protein>
<evidence type="ECO:0000255" key="1">
    <source>
        <dbReference type="HAMAP-Rule" id="MF_01031"/>
    </source>
</evidence>
<accession>Q2IJC3</accession>
<dbReference type="EC" id="4.2.1.33" evidence="1"/>
<dbReference type="EMBL" id="CP000251">
    <property type="protein sequence ID" value="ABC81750.1"/>
    <property type="molecule type" value="Genomic_DNA"/>
</dbReference>
<dbReference type="RefSeq" id="WP_011421032.1">
    <property type="nucleotide sequence ID" value="NC_007760.1"/>
</dbReference>
<dbReference type="SMR" id="Q2IJC3"/>
<dbReference type="STRING" id="290397.Adeh_1979"/>
<dbReference type="KEGG" id="ade:Adeh_1979"/>
<dbReference type="eggNOG" id="COG0066">
    <property type="taxonomic scope" value="Bacteria"/>
</dbReference>
<dbReference type="HOGENOM" id="CLU_081378_0_3_7"/>
<dbReference type="OrthoDB" id="9777465at2"/>
<dbReference type="UniPathway" id="UPA00048">
    <property type="reaction ID" value="UER00071"/>
</dbReference>
<dbReference type="Proteomes" id="UP000001935">
    <property type="component" value="Chromosome"/>
</dbReference>
<dbReference type="GO" id="GO:0009316">
    <property type="term" value="C:3-isopropylmalate dehydratase complex"/>
    <property type="evidence" value="ECO:0007669"/>
    <property type="project" value="InterPro"/>
</dbReference>
<dbReference type="GO" id="GO:0003861">
    <property type="term" value="F:3-isopropylmalate dehydratase activity"/>
    <property type="evidence" value="ECO:0007669"/>
    <property type="project" value="UniProtKB-UniRule"/>
</dbReference>
<dbReference type="GO" id="GO:0009098">
    <property type="term" value="P:L-leucine biosynthetic process"/>
    <property type="evidence" value="ECO:0007669"/>
    <property type="project" value="UniProtKB-UniRule"/>
</dbReference>
<dbReference type="CDD" id="cd01577">
    <property type="entry name" value="IPMI_Swivel"/>
    <property type="match status" value="1"/>
</dbReference>
<dbReference type="FunFam" id="3.20.19.10:FF:000003">
    <property type="entry name" value="3-isopropylmalate dehydratase small subunit"/>
    <property type="match status" value="1"/>
</dbReference>
<dbReference type="Gene3D" id="3.20.19.10">
    <property type="entry name" value="Aconitase, domain 4"/>
    <property type="match status" value="1"/>
</dbReference>
<dbReference type="HAMAP" id="MF_01031">
    <property type="entry name" value="LeuD_type1"/>
    <property type="match status" value="1"/>
</dbReference>
<dbReference type="InterPro" id="IPR004431">
    <property type="entry name" value="3-IsopropMal_deHydase_ssu"/>
</dbReference>
<dbReference type="InterPro" id="IPR015928">
    <property type="entry name" value="Aconitase/3IPM_dehydase_swvl"/>
</dbReference>
<dbReference type="InterPro" id="IPR000573">
    <property type="entry name" value="AconitaseA/IPMdHydase_ssu_swvl"/>
</dbReference>
<dbReference type="InterPro" id="IPR033940">
    <property type="entry name" value="IPMI_Swivel"/>
</dbReference>
<dbReference type="InterPro" id="IPR050075">
    <property type="entry name" value="LeuD"/>
</dbReference>
<dbReference type="NCBIfam" id="TIGR00171">
    <property type="entry name" value="leuD"/>
    <property type="match status" value="1"/>
</dbReference>
<dbReference type="NCBIfam" id="NF002458">
    <property type="entry name" value="PRK01641.1"/>
    <property type="match status" value="1"/>
</dbReference>
<dbReference type="PANTHER" id="PTHR43345:SF5">
    <property type="entry name" value="3-ISOPROPYLMALATE DEHYDRATASE SMALL SUBUNIT"/>
    <property type="match status" value="1"/>
</dbReference>
<dbReference type="PANTHER" id="PTHR43345">
    <property type="entry name" value="3-ISOPROPYLMALATE DEHYDRATASE SMALL SUBUNIT 2-RELATED-RELATED"/>
    <property type="match status" value="1"/>
</dbReference>
<dbReference type="Pfam" id="PF00694">
    <property type="entry name" value="Aconitase_C"/>
    <property type="match status" value="1"/>
</dbReference>
<dbReference type="SUPFAM" id="SSF52016">
    <property type="entry name" value="LeuD/IlvD-like"/>
    <property type="match status" value="1"/>
</dbReference>
<organism>
    <name type="scientific">Anaeromyxobacter dehalogenans (strain 2CP-C)</name>
    <dbReference type="NCBI Taxonomy" id="290397"/>
    <lineage>
        <taxon>Bacteria</taxon>
        <taxon>Pseudomonadati</taxon>
        <taxon>Myxococcota</taxon>
        <taxon>Myxococcia</taxon>
        <taxon>Myxococcales</taxon>
        <taxon>Cystobacterineae</taxon>
        <taxon>Anaeromyxobacteraceae</taxon>
        <taxon>Anaeromyxobacter</taxon>
    </lineage>
</organism>
<proteinExistence type="inferred from homology"/>